<keyword id="KW-0004">4Fe-4S</keyword>
<keyword id="KW-0963">Cytoplasm</keyword>
<keyword id="KW-0408">Iron</keyword>
<keyword id="KW-0411">Iron-sulfur</keyword>
<keyword id="KW-0479">Metal-binding</keyword>
<keyword id="KW-0560">Oxidoreductase</keyword>
<keyword id="KW-0671">Queuosine biosynthesis</keyword>
<keyword id="KW-1185">Reference proteome</keyword>
<keyword id="KW-0819">tRNA processing</keyword>
<name>QUEG_ALIF1</name>
<gene>
    <name evidence="1" type="primary">queG</name>
    <name type="ordered locus">VF_2328</name>
</gene>
<dbReference type="EC" id="1.17.99.6" evidence="1"/>
<dbReference type="EMBL" id="CP000020">
    <property type="protein sequence ID" value="AAW86823.1"/>
    <property type="molecule type" value="Genomic_DNA"/>
</dbReference>
<dbReference type="RefSeq" id="YP_205711.1">
    <property type="nucleotide sequence ID" value="NC_006840.2"/>
</dbReference>
<dbReference type="SMR" id="Q5E2C3"/>
<dbReference type="STRING" id="312309.VF_2328"/>
<dbReference type="EnsemblBacteria" id="AAW86823">
    <property type="protein sequence ID" value="AAW86823"/>
    <property type="gene ID" value="VF_2328"/>
</dbReference>
<dbReference type="KEGG" id="vfi:VF_2328"/>
<dbReference type="PATRIC" id="fig|312309.11.peg.2367"/>
<dbReference type="eggNOG" id="COG1600">
    <property type="taxonomic scope" value="Bacteria"/>
</dbReference>
<dbReference type="HOGENOM" id="CLU_030790_0_1_6"/>
<dbReference type="OrthoDB" id="9784571at2"/>
<dbReference type="UniPathway" id="UPA00392"/>
<dbReference type="Proteomes" id="UP000000537">
    <property type="component" value="Chromosome I"/>
</dbReference>
<dbReference type="GO" id="GO:0005737">
    <property type="term" value="C:cytoplasm"/>
    <property type="evidence" value="ECO:0007669"/>
    <property type="project" value="UniProtKB-SubCell"/>
</dbReference>
<dbReference type="GO" id="GO:0051539">
    <property type="term" value="F:4 iron, 4 sulfur cluster binding"/>
    <property type="evidence" value="ECO:0007669"/>
    <property type="project" value="UniProtKB-KW"/>
</dbReference>
<dbReference type="GO" id="GO:0052693">
    <property type="term" value="F:epoxyqueuosine reductase activity"/>
    <property type="evidence" value="ECO:0007669"/>
    <property type="project" value="UniProtKB-UniRule"/>
</dbReference>
<dbReference type="GO" id="GO:0046872">
    <property type="term" value="F:metal ion binding"/>
    <property type="evidence" value="ECO:0007669"/>
    <property type="project" value="UniProtKB-KW"/>
</dbReference>
<dbReference type="GO" id="GO:0008616">
    <property type="term" value="P:queuosine biosynthetic process"/>
    <property type="evidence" value="ECO:0007669"/>
    <property type="project" value="UniProtKB-UniRule"/>
</dbReference>
<dbReference type="GO" id="GO:0006400">
    <property type="term" value="P:tRNA modification"/>
    <property type="evidence" value="ECO:0007669"/>
    <property type="project" value="UniProtKB-UniRule"/>
</dbReference>
<dbReference type="FunFam" id="3.30.70.20:FF:000017">
    <property type="entry name" value="Epoxyqueuosine reductase"/>
    <property type="match status" value="1"/>
</dbReference>
<dbReference type="Gene3D" id="3.30.70.20">
    <property type="match status" value="1"/>
</dbReference>
<dbReference type="HAMAP" id="MF_00916">
    <property type="entry name" value="QueG"/>
    <property type="match status" value="1"/>
</dbReference>
<dbReference type="InterPro" id="IPR017896">
    <property type="entry name" value="4Fe4S_Fe-S-bd"/>
</dbReference>
<dbReference type="InterPro" id="IPR017900">
    <property type="entry name" value="4Fe4S_Fe_S_CS"/>
</dbReference>
<dbReference type="InterPro" id="IPR004453">
    <property type="entry name" value="QueG"/>
</dbReference>
<dbReference type="InterPro" id="IPR013542">
    <property type="entry name" value="QueG_DUF1730"/>
</dbReference>
<dbReference type="NCBIfam" id="TIGR00276">
    <property type="entry name" value="tRNA epoxyqueuosine(34) reductase QueG"/>
    <property type="match status" value="1"/>
</dbReference>
<dbReference type="PANTHER" id="PTHR30002">
    <property type="entry name" value="EPOXYQUEUOSINE REDUCTASE"/>
    <property type="match status" value="1"/>
</dbReference>
<dbReference type="PANTHER" id="PTHR30002:SF4">
    <property type="entry name" value="EPOXYQUEUOSINE REDUCTASE"/>
    <property type="match status" value="1"/>
</dbReference>
<dbReference type="Pfam" id="PF13484">
    <property type="entry name" value="Fer4_16"/>
    <property type="match status" value="1"/>
</dbReference>
<dbReference type="Pfam" id="PF08331">
    <property type="entry name" value="QueG_DUF1730"/>
    <property type="match status" value="1"/>
</dbReference>
<dbReference type="SUPFAM" id="SSF54862">
    <property type="entry name" value="4Fe-4S ferredoxins"/>
    <property type="match status" value="1"/>
</dbReference>
<dbReference type="PROSITE" id="PS00198">
    <property type="entry name" value="4FE4S_FER_1"/>
    <property type="match status" value="1"/>
</dbReference>
<dbReference type="PROSITE" id="PS51379">
    <property type="entry name" value="4FE4S_FER_2"/>
    <property type="match status" value="1"/>
</dbReference>
<comment type="function">
    <text evidence="1">Catalyzes the conversion of epoxyqueuosine (oQ) to queuosine (Q), which is a hypermodified base found in the wobble positions of tRNA(Asp), tRNA(Asn), tRNA(His) and tRNA(Tyr).</text>
</comment>
<comment type="catalytic activity">
    <reaction evidence="1">
        <text>epoxyqueuosine(34) in tRNA + AH2 = queuosine(34) in tRNA + A + H2O</text>
        <dbReference type="Rhea" id="RHEA:32159"/>
        <dbReference type="Rhea" id="RHEA-COMP:18571"/>
        <dbReference type="Rhea" id="RHEA-COMP:18582"/>
        <dbReference type="ChEBI" id="CHEBI:13193"/>
        <dbReference type="ChEBI" id="CHEBI:15377"/>
        <dbReference type="ChEBI" id="CHEBI:17499"/>
        <dbReference type="ChEBI" id="CHEBI:194431"/>
        <dbReference type="ChEBI" id="CHEBI:194443"/>
        <dbReference type="EC" id="1.17.99.6"/>
    </reaction>
</comment>
<comment type="cofactor">
    <cofactor evidence="1">
        <name>cob(II)alamin</name>
        <dbReference type="ChEBI" id="CHEBI:16304"/>
    </cofactor>
</comment>
<comment type="cofactor">
    <cofactor evidence="1">
        <name>[4Fe-4S] cluster</name>
        <dbReference type="ChEBI" id="CHEBI:49883"/>
    </cofactor>
    <text evidence="1">Binds 2 [4Fe-4S] clusters per monomer.</text>
</comment>
<comment type="pathway">
    <text evidence="1">tRNA modification; tRNA-queuosine biosynthesis.</text>
</comment>
<comment type="subunit">
    <text evidence="1">Monomer.</text>
</comment>
<comment type="subcellular location">
    <subcellularLocation>
        <location evidence="1">Cytoplasm</location>
    </subcellularLocation>
</comment>
<comment type="similarity">
    <text evidence="1">Belongs to the QueG family.</text>
</comment>
<evidence type="ECO:0000255" key="1">
    <source>
        <dbReference type="HAMAP-Rule" id="MF_00916"/>
    </source>
</evidence>
<feature type="chain" id="PRO_0000416088" description="Epoxyqueuosine reductase">
    <location>
        <begin position="1"/>
        <end position="371"/>
    </location>
</feature>
<feature type="domain" description="4Fe-4S ferredoxin-type" evidence="1">
    <location>
        <begin position="179"/>
        <end position="211"/>
    </location>
</feature>
<feature type="active site" description="Proton donor" evidence="1">
    <location>
        <position position="137"/>
    </location>
</feature>
<feature type="binding site" evidence="1">
    <location>
        <position position="191"/>
    </location>
    <ligand>
        <name>[4Fe-4S] cluster</name>
        <dbReference type="ChEBI" id="CHEBI:49883"/>
        <label>1</label>
    </ligand>
</feature>
<feature type="binding site" evidence="1">
    <location>
        <position position="194"/>
    </location>
    <ligand>
        <name>[4Fe-4S] cluster</name>
        <dbReference type="ChEBI" id="CHEBI:49883"/>
        <label>1</label>
    </ligand>
</feature>
<feature type="binding site" evidence="1">
    <location>
        <position position="197"/>
    </location>
    <ligand>
        <name>[4Fe-4S] cluster</name>
        <dbReference type="ChEBI" id="CHEBI:49883"/>
        <label>1</label>
    </ligand>
</feature>
<feature type="binding site" evidence="1">
    <location>
        <position position="201"/>
    </location>
    <ligand>
        <name>[4Fe-4S] cluster</name>
        <dbReference type="ChEBI" id="CHEBI:49883"/>
        <label>2</label>
    </ligand>
</feature>
<feature type="binding site" evidence="1">
    <location>
        <position position="217"/>
    </location>
    <ligand>
        <name>[4Fe-4S] cluster</name>
        <dbReference type="ChEBI" id="CHEBI:49883"/>
        <label>2</label>
    </ligand>
</feature>
<feature type="binding site" evidence="1">
    <location>
        <position position="244"/>
    </location>
    <ligand>
        <name>[4Fe-4S] cluster</name>
        <dbReference type="ChEBI" id="CHEBI:49883"/>
        <label>2</label>
    </ligand>
</feature>
<feature type="binding site" evidence="1">
    <location>
        <position position="247"/>
    </location>
    <ligand>
        <name>[4Fe-4S] cluster</name>
        <dbReference type="ChEBI" id="CHEBI:49883"/>
        <label>2</label>
    </ligand>
</feature>
<feature type="binding site" evidence="1">
    <location>
        <position position="251"/>
    </location>
    <ligand>
        <name>[4Fe-4S] cluster</name>
        <dbReference type="ChEBI" id="CHEBI:49883"/>
        <label>1</label>
    </ligand>
</feature>
<accession>Q5E2C3</accession>
<protein>
    <recommendedName>
        <fullName evidence="1">Epoxyqueuosine reductase</fullName>
        <ecNumber evidence="1">1.17.99.6</ecNumber>
    </recommendedName>
    <alternativeName>
        <fullName evidence="1">Queuosine biosynthesis protein QueG</fullName>
    </alternativeName>
</protein>
<reference key="1">
    <citation type="journal article" date="2005" name="Proc. Natl. Acad. Sci. U.S.A.">
        <title>Complete genome sequence of Vibrio fischeri: a symbiotic bacterium with pathogenic congeners.</title>
        <authorList>
            <person name="Ruby E.G."/>
            <person name="Urbanowski M."/>
            <person name="Campbell J."/>
            <person name="Dunn A."/>
            <person name="Faini M."/>
            <person name="Gunsalus R."/>
            <person name="Lostroh P."/>
            <person name="Lupp C."/>
            <person name="McCann J."/>
            <person name="Millikan D."/>
            <person name="Schaefer A."/>
            <person name="Stabb E."/>
            <person name="Stevens A."/>
            <person name="Visick K."/>
            <person name="Whistler C."/>
            <person name="Greenberg E.P."/>
        </authorList>
    </citation>
    <scope>NUCLEOTIDE SEQUENCE [LARGE SCALE GENOMIC DNA]</scope>
    <source>
        <strain>ATCC 700601 / ES114</strain>
    </source>
</reference>
<organism>
    <name type="scientific">Aliivibrio fischeri (strain ATCC 700601 / ES114)</name>
    <name type="common">Vibrio fischeri</name>
    <dbReference type="NCBI Taxonomy" id="312309"/>
    <lineage>
        <taxon>Bacteria</taxon>
        <taxon>Pseudomonadati</taxon>
        <taxon>Pseudomonadota</taxon>
        <taxon>Gammaproteobacteria</taxon>
        <taxon>Vibrionales</taxon>
        <taxon>Vibrionaceae</taxon>
        <taxon>Aliivibrio</taxon>
    </lineage>
</organism>
<proteinExistence type="inferred from homology"/>
<sequence length="371" mass="41974">MKINYQELANNIKLWAKELGFQKVGICDVDLSQHEAALEQWLEAGYHGSMDWMARHGVMRARPDELHPGTIRVISARMDYLPPKAGFASNLKDPNQAYISRYALGRDYHKLIRNQLKKLGQKIEEEVEQLGYRPFVDSAPILERPLAEKAGLGWTGKHSLLLDKNAGSWFFLGELLVDIPLPVDTPVENQCGKCTACISSCPTNAILENGVIDARRCISYLTIENSGIIPEEFRSLMGNRIYGCDDCQLVCPWNREAEITQQADFHRRSSLGNSDLISLFSWDESTFLKNMEGSAIRRIGHIQWLRNLSIAMGNAPHSEAIISALQDRLGLDENLDIHIQWAIKQQSLVITSNRKEQRLIRIIEKGLPRDA</sequence>